<evidence type="ECO:0000255" key="1">
    <source>
        <dbReference type="HAMAP-Rule" id="MF_00182"/>
    </source>
</evidence>
<comment type="function">
    <text evidence="1">Attaches a formyl group to the free amino group of methionyl-tRNA(fMet). The formyl group appears to play a dual role in the initiator identity of N-formylmethionyl-tRNA by promoting its recognition by IF2 and preventing the misappropriation of this tRNA by the elongation apparatus.</text>
</comment>
<comment type="catalytic activity">
    <reaction evidence="1">
        <text>L-methionyl-tRNA(fMet) + (6R)-10-formyltetrahydrofolate = N-formyl-L-methionyl-tRNA(fMet) + (6S)-5,6,7,8-tetrahydrofolate + H(+)</text>
        <dbReference type="Rhea" id="RHEA:24380"/>
        <dbReference type="Rhea" id="RHEA-COMP:9952"/>
        <dbReference type="Rhea" id="RHEA-COMP:9953"/>
        <dbReference type="ChEBI" id="CHEBI:15378"/>
        <dbReference type="ChEBI" id="CHEBI:57453"/>
        <dbReference type="ChEBI" id="CHEBI:78530"/>
        <dbReference type="ChEBI" id="CHEBI:78844"/>
        <dbReference type="ChEBI" id="CHEBI:195366"/>
        <dbReference type="EC" id="2.1.2.9"/>
    </reaction>
</comment>
<comment type="similarity">
    <text evidence="1">Belongs to the Fmt family.</text>
</comment>
<dbReference type="EC" id="2.1.2.9" evidence="1"/>
<dbReference type="EMBL" id="CP000247">
    <property type="protein sequence ID" value="ABG71355.1"/>
    <property type="molecule type" value="Genomic_DNA"/>
</dbReference>
<dbReference type="RefSeq" id="WP_000004426.1">
    <property type="nucleotide sequence ID" value="NC_008253.1"/>
</dbReference>
<dbReference type="SMR" id="Q0TCH4"/>
<dbReference type="KEGG" id="ecp:ECP_3375"/>
<dbReference type="HOGENOM" id="CLU_033347_1_2_6"/>
<dbReference type="Proteomes" id="UP000009182">
    <property type="component" value="Chromosome"/>
</dbReference>
<dbReference type="GO" id="GO:0005829">
    <property type="term" value="C:cytosol"/>
    <property type="evidence" value="ECO:0007669"/>
    <property type="project" value="TreeGrafter"/>
</dbReference>
<dbReference type="GO" id="GO:0004479">
    <property type="term" value="F:methionyl-tRNA formyltransferase activity"/>
    <property type="evidence" value="ECO:0007669"/>
    <property type="project" value="UniProtKB-UniRule"/>
</dbReference>
<dbReference type="CDD" id="cd08646">
    <property type="entry name" value="FMT_core_Met-tRNA-FMT_N"/>
    <property type="match status" value="1"/>
</dbReference>
<dbReference type="CDD" id="cd08704">
    <property type="entry name" value="Met_tRNA_FMT_C"/>
    <property type="match status" value="1"/>
</dbReference>
<dbReference type="FunFam" id="3.10.25.10:FF:000001">
    <property type="entry name" value="Methionyl-tRNA formyltransferase"/>
    <property type="match status" value="1"/>
</dbReference>
<dbReference type="FunFam" id="3.40.50.12230:FF:000001">
    <property type="entry name" value="Methionyl-tRNA formyltransferase"/>
    <property type="match status" value="1"/>
</dbReference>
<dbReference type="FunFam" id="3.40.50.170:FF:000003">
    <property type="entry name" value="Methionyl-tRNA formyltransferase"/>
    <property type="match status" value="1"/>
</dbReference>
<dbReference type="Gene3D" id="3.10.25.10">
    <property type="entry name" value="Formyl transferase, C-terminal domain"/>
    <property type="match status" value="1"/>
</dbReference>
<dbReference type="Gene3D" id="3.40.50.170">
    <property type="entry name" value="Formyl transferase, N-terminal domain"/>
    <property type="match status" value="1"/>
</dbReference>
<dbReference type="HAMAP" id="MF_00182">
    <property type="entry name" value="Formyl_trans"/>
    <property type="match status" value="1"/>
</dbReference>
<dbReference type="InterPro" id="IPR005794">
    <property type="entry name" value="Fmt"/>
</dbReference>
<dbReference type="InterPro" id="IPR005793">
    <property type="entry name" value="Formyl_trans_C"/>
</dbReference>
<dbReference type="InterPro" id="IPR037022">
    <property type="entry name" value="Formyl_trans_C_sf"/>
</dbReference>
<dbReference type="InterPro" id="IPR002376">
    <property type="entry name" value="Formyl_transf_N"/>
</dbReference>
<dbReference type="InterPro" id="IPR036477">
    <property type="entry name" value="Formyl_transf_N_sf"/>
</dbReference>
<dbReference type="InterPro" id="IPR011034">
    <property type="entry name" value="Formyl_transferase-like_C_sf"/>
</dbReference>
<dbReference type="InterPro" id="IPR001555">
    <property type="entry name" value="GART_AS"/>
</dbReference>
<dbReference type="InterPro" id="IPR044135">
    <property type="entry name" value="Met-tRNA-FMT_C"/>
</dbReference>
<dbReference type="InterPro" id="IPR041711">
    <property type="entry name" value="Met-tRNA-FMT_N"/>
</dbReference>
<dbReference type="NCBIfam" id="TIGR00460">
    <property type="entry name" value="fmt"/>
    <property type="match status" value="1"/>
</dbReference>
<dbReference type="PANTHER" id="PTHR11138">
    <property type="entry name" value="METHIONYL-TRNA FORMYLTRANSFERASE"/>
    <property type="match status" value="1"/>
</dbReference>
<dbReference type="PANTHER" id="PTHR11138:SF5">
    <property type="entry name" value="METHIONYL-TRNA FORMYLTRANSFERASE, MITOCHONDRIAL"/>
    <property type="match status" value="1"/>
</dbReference>
<dbReference type="Pfam" id="PF02911">
    <property type="entry name" value="Formyl_trans_C"/>
    <property type="match status" value="1"/>
</dbReference>
<dbReference type="Pfam" id="PF00551">
    <property type="entry name" value="Formyl_trans_N"/>
    <property type="match status" value="1"/>
</dbReference>
<dbReference type="SUPFAM" id="SSF50486">
    <property type="entry name" value="FMT C-terminal domain-like"/>
    <property type="match status" value="1"/>
</dbReference>
<dbReference type="SUPFAM" id="SSF53328">
    <property type="entry name" value="Formyltransferase"/>
    <property type="match status" value="1"/>
</dbReference>
<dbReference type="PROSITE" id="PS00373">
    <property type="entry name" value="GART"/>
    <property type="match status" value="1"/>
</dbReference>
<organism>
    <name type="scientific">Escherichia coli O6:K15:H31 (strain 536 / UPEC)</name>
    <dbReference type="NCBI Taxonomy" id="362663"/>
    <lineage>
        <taxon>Bacteria</taxon>
        <taxon>Pseudomonadati</taxon>
        <taxon>Pseudomonadota</taxon>
        <taxon>Gammaproteobacteria</taxon>
        <taxon>Enterobacterales</taxon>
        <taxon>Enterobacteriaceae</taxon>
        <taxon>Escherichia</taxon>
    </lineage>
</organism>
<gene>
    <name evidence="1" type="primary">fmt</name>
    <name type="ordered locus">ECP_3375</name>
</gene>
<name>FMT_ECOL5</name>
<accession>Q0TCH4</accession>
<sequence>MSESLRIIFAGTPDFAARHLDALLSSGHNIVGVFTQPDRPAGRGKKLMPSPVKVQAEDKGLPVFQPVSLRPQENQQLVADLQADVMVVVAYGLILPKAVLEMPRLGCINVHGSLLPRWRGAAPIQRSLWAGDAETGVTIMQMDVGLDTGDMLYKLSCPITAEDTSGTLYDKLAELGPQGLITTLKQLADGTAKPEVQDETLVTYAEKLSKEEARIDWSLSAAQLERCIRAFNPWPMSWLEIEGQPVKVWKASVIDTTTKAAPGTILEANKQGIQVATGDGILNLLSMQPAGKKAMSVQDLLNSRREWFVPGNRLA</sequence>
<proteinExistence type="inferred from homology"/>
<reference key="1">
    <citation type="journal article" date="2006" name="Mol. Microbiol.">
        <title>Role of pathogenicity island-associated integrases in the genome plasticity of uropathogenic Escherichia coli strain 536.</title>
        <authorList>
            <person name="Hochhut B."/>
            <person name="Wilde C."/>
            <person name="Balling G."/>
            <person name="Middendorf B."/>
            <person name="Dobrindt U."/>
            <person name="Brzuszkiewicz E."/>
            <person name="Gottschalk G."/>
            <person name="Carniel E."/>
            <person name="Hacker J."/>
        </authorList>
    </citation>
    <scope>NUCLEOTIDE SEQUENCE [LARGE SCALE GENOMIC DNA]</scope>
    <source>
        <strain>536 / UPEC</strain>
    </source>
</reference>
<keyword id="KW-0648">Protein biosynthesis</keyword>
<keyword id="KW-0808">Transferase</keyword>
<feature type="chain" id="PRO_1000020056" description="Methionyl-tRNA formyltransferase">
    <location>
        <begin position="1"/>
        <end position="315"/>
    </location>
</feature>
<feature type="binding site" evidence="1">
    <location>
        <begin position="113"/>
        <end position="116"/>
    </location>
    <ligand>
        <name>(6S)-5,6,7,8-tetrahydrofolate</name>
        <dbReference type="ChEBI" id="CHEBI:57453"/>
    </ligand>
</feature>
<protein>
    <recommendedName>
        <fullName evidence="1">Methionyl-tRNA formyltransferase</fullName>
        <ecNumber evidence="1">2.1.2.9</ecNumber>
    </recommendedName>
</protein>